<gene>
    <name type="primary">HAX1</name>
    <name type="synonym">HS1BP1</name>
</gene>
<proteinExistence type="evidence at protein level"/>
<accession>O00165</accession>
<accession>A8W4W9</accession>
<accession>A8W4X0</accession>
<accession>B4DUJ7</accession>
<accession>Q5VYD5</accession>
<accession>Q5VYD7</accession>
<accession>Q96AU4</accession>
<accession>Q9BS80</accession>
<organism>
    <name type="scientific">Homo sapiens</name>
    <name type="common">Human</name>
    <dbReference type="NCBI Taxonomy" id="9606"/>
    <lineage>
        <taxon>Eukaryota</taxon>
        <taxon>Metazoa</taxon>
        <taxon>Chordata</taxon>
        <taxon>Craniata</taxon>
        <taxon>Vertebrata</taxon>
        <taxon>Euteleostomi</taxon>
        <taxon>Mammalia</taxon>
        <taxon>Eutheria</taxon>
        <taxon>Euarchontoglires</taxon>
        <taxon>Primates</taxon>
        <taxon>Haplorrhini</taxon>
        <taxon>Catarrhini</taxon>
        <taxon>Hominidae</taxon>
        <taxon>Homo</taxon>
    </lineage>
</organism>
<comment type="function">
    <text evidence="6 8 11 12 14 23 24">Recruits the Arp2/3 complex to the cell cortex and regulates reorganization of the cortical actin cytoskeleton via its interaction with KCNC3 and the Arp2/3 complex (PubMed:26997484). Slows down the rate of inactivation of KCNC3 channels (PubMed:26997484). Promotes GNA13-mediated cell migration. Involved in the clathrin-mediated endocytosis pathway. May be involved in internalization of ABC transporters such as ABCB11. May inhibit CASP9 and CASP3. Promotes cell survival. May regulate intracellular calcium pools.</text>
</comment>
<comment type="subunit">
    <text evidence="3 5 6 8 10 11 14 16 18 19 20 21 22 23 24">Interacts with ABCB1, ABCB4 and ABCB11 (By similarity). Directly associates with HCLS1/HS1, through binding to its N-terminal region (PubMed:9058808). Interacts with CTTN (By similarity). Interacts with PKD2 (PubMed:10760273). Interacts with GNA13 (PubMed:15339924). Interacts with CASP9 (PubMed:16857965). Interacts with ITGB6 (PubMed:17545607). Interacts with PLN and ATP2A2; these interactions are inhibited by calcium (PubMed:17241641, PubMed:18971376). Interacts with GRB7 (PubMed:20665473). Interacts (via C-terminus) with XIAP/BIRC4 (via BIR 2 domain and BIR 3 domain) and this interaction blocks ubiquitination of XIAP/BIRC4 (PubMed:20171186). Interacts with TPC2 (PubMed:24188827). Interacts with KCNC3 (PubMed:26997484). Interacts with XPO1 (PubMed:23164465). Interacts with RNF217 (PubMed:25298122). Interacts with UCP3; the interaction is direct and calcium-dependent (PubMed:26915802). Interacts with MAPRE2; this interaction regulates cell migration in keratinocytes (PubMed:26527684).</text>
</comment>
<comment type="interaction">
    <interactant intactId="EBI-357001">
        <id>O00165</id>
    </interactant>
    <interactant intactId="EBI-78473">
        <id>P03372</id>
        <label>ESR1</label>
    </interactant>
    <organismsDiffer>false</organismsDiffer>
    <experiments>2</experiments>
</comment>
<comment type="interaction">
    <interactant intactId="EBI-357001">
        <id>O00165</id>
    </interactant>
    <interactant intactId="EBI-970191">
        <id>Q14451</id>
        <label>GRB7</label>
    </interactant>
    <organismsDiffer>false</organismsDiffer>
    <experiments>2</experiments>
</comment>
<comment type="interaction">
    <interactant intactId="EBI-357001">
        <id>O00165</id>
    </interactant>
    <interactant intactId="EBI-466029">
        <id>P42858</id>
        <label>HTT</label>
    </interactant>
    <organismsDiffer>false</organismsDiffer>
    <experiments>14</experiments>
</comment>
<comment type="interaction">
    <interactant intactId="EBI-357001">
        <id>O00165</id>
    </interactant>
    <interactant intactId="EBI-1749782">
        <id>P01583</id>
        <label>IL1A</label>
    </interactant>
    <organismsDiffer>false</organismsDiffer>
    <experiments>3</experiments>
</comment>
<comment type="interaction">
    <interactant intactId="EBI-357001">
        <id>O00165</id>
    </interactant>
    <interactant intactId="EBI-399080">
        <id>Q92993</id>
        <label>KAT5</label>
    </interactant>
    <organismsDiffer>false</organismsDiffer>
    <experiments>3</experiments>
</comment>
<comment type="interaction">
    <interactant intactId="EBI-357001">
        <id>O00165</id>
    </interactant>
    <interactant intactId="EBI-11742507">
        <id>Q8TAP4-4</id>
        <label>LMO3</label>
    </interactant>
    <organismsDiffer>false</organismsDiffer>
    <experiments>3</experiments>
</comment>
<comment type="interaction">
    <interactant intactId="EBI-357001">
        <id>O00165</id>
    </interactant>
    <interactant intactId="EBI-721328">
        <id>P58340</id>
        <label>MLF1</label>
    </interactant>
    <organismsDiffer>false</organismsDiffer>
    <experiments>2</experiments>
</comment>
<comment type="interaction">
    <interactant intactId="EBI-357001">
        <id>O00165</id>
    </interactant>
    <interactant intactId="EBI-1043580">
        <id>Q9BRX2</id>
        <label>PELO</label>
    </interactant>
    <organismsDiffer>false</organismsDiffer>
    <experiments>7</experiments>
</comment>
<comment type="interaction">
    <interactant intactId="EBI-357001">
        <id>O00165</id>
    </interactant>
    <interactant intactId="EBI-1017775">
        <id>Q9H4B6</id>
        <label>SAV1</label>
    </interactant>
    <organismsDiffer>false</organismsDiffer>
    <experiments>7</experiments>
</comment>
<comment type="interaction">
    <interactant intactId="EBI-357001">
        <id>O00165</id>
    </interactant>
    <interactant intactId="EBI-9090795">
        <id>Q15047-2</id>
        <label>SETDB1</label>
    </interactant>
    <organismsDiffer>false</organismsDiffer>
    <experiments>3</experiments>
</comment>
<comment type="interaction">
    <interactant intactId="EBI-357001">
        <id>O00165</id>
    </interactant>
    <interactant intactId="EBI-5239895">
        <id>Q9ULQ1</id>
        <label>TPCN1</label>
    </interactant>
    <organismsDiffer>false</organismsDiffer>
    <experiments>2</experiments>
</comment>
<comment type="interaction">
    <interactant intactId="EBI-357001">
        <id>O00165</id>
    </interactant>
    <interactant intactId="EBI-5239949">
        <id>Q8NHX9</id>
        <label>TPCN2</label>
    </interactant>
    <organismsDiffer>false</organismsDiffer>
    <experiments>4</experiments>
</comment>
<comment type="interaction">
    <interactant intactId="EBI-357001">
        <id>O00165</id>
    </interactant>
    <interactant intactId="EBI-359832">
        <id>P61981</id>
        <label>YWHAG</label>
    </interactant>
    <organismsDiffer>false</organismsDiffer>
    <experiments>3</experiments>
</comment>
<comment type="interaction">
    <interactant intactId="EBI-357001">
        <id>O00165</id>
    </interactant>
    <interactant intactId="EBI-12522528">
        <id>Q68871</id>
    </interactant>
    <organismsDiffer>true</organismsDiffer>
    <experiments>3</experiments>
</comment>
<comment type="subcellular location">
    <subcellularLocation>
        <location evidence="14 24">Mitochondrion matrix</location>
    </subcellularLocation>
    <subcellularLocation>
        <location evidence="14 24">Endoplasmic reticulum</location>
    </subcellularLocation>
    <subcellularLocation>
        <location evidence="24">Nucleus membrane</location>
    </subcellularLocation>
    <subcellularLocation>
        <location evidence="2">Cytoplasmic vesicle</location>
    </subcellularLocation>
    <subcellularLocation>
        <location evidence="23">Cytoplasm</location>
        <location evidence="23">Cell cortex</location>
    </subcellularLocation>
    <subcellularLocation>
        <location evidence="23">Cell membrane</location>
        <topology evidence="23">Peripheral membrane protein</topology>
        <orientation evidence="23">Cytoplasmic side</orientation>
    </subcellularLocation>
    <subcellularLocation>
        <location evidence="3">Sarcoplasmic reticulum</location>
    </subcellularLocation>
    <subcellularLocation>
        <location evidence="19">Cytoplasm</location>
        <location evidence="19">P-body</location>
    </subcellularLocation>
</comment>
<comment type="subcellular location">
    <molecule>Isoform 1</molecule>
    <subcellularLocation>
        <location evidence="19 21">Cytoplasm</location>
    </subcellularLocation>
    <subcellularLocation>
        <location evidence="19">Nucleus</location>
    </subcellularLocation>
    <text evidence="19">Predominantly cytoplasmic. Also detected in the nucleus when nuclear export is inhibited, and in response to cellular stress caused by arsenite (in vitro).</text>
</comment>
<comment type="subcellular location">
    <molecule>Isoform 3</molecule>
    <subcellularLocation>
        <location evidence="19">Cytoplasm</location>
    </subcellularLocation>
    <subcellularLocation>
        <location evidence="19">Nucleus</location>
    </subcellularLocation>
    <text evidence="19">Predominantly cytoplasmic. Also detected in the nucleus when nuclear export is inhibited (in vitro).</text>
</comment>
<comment type="subcellular location">
    <molecule>Isoform 4</molecule>
    <subcellularLocation>
        <location evidence="19">Cytoplasm</location>
    </subcellularLocation>
    <subcellularLocation>
        <location evidence="19">Nucleus</location>
    </subcellularLocation>
    <text evidence="19">Shuttles between nucleus and cytoplasm.</text>
</comment>
<comment type="subcellular location">
    <molecule>Isoform 5</molecule>
    <subcellularLocation>
        <location evidence="19">Cytoplasm</location>
    </subcellularLocation>
    <text evidence="19">Predominantly cytoplasmic.</text>
</comment>
<comment type="alternative products">
    <event type="alternative splicing"/>
    <isoform>
        <id>O00165-1</id>
        <name>1</name>
        <sequence type="displayed"/>
    </isoform>
    <isoform>
        <id>O00165-2</id>
        <name>2</name>
        <sequence type="described" ref="VSP_038537"/>
    </isoform>
    <isoform>
        <id>O00165-3</id>
        <name>3</name>
        <sequence type="described" ref="VSP_038536"/>
    </isoform>
    <isoform>
        <id>O00165-4</id>
        <name>4</name>
        <sequence type="described" ref="VSP_038538 VSP_038539"/>
    </isoform>
    <isoform>
        <id>O00165-5</id>
        <name>5</name>
        <sequence type="described" ref="VSP_038543"/>
    </isoform>
    <isoform>
        <id>O00165-6</id>
        <name>6</name>
        <sequence type="described" ref="VSP_038544 VSP_038545"/>
    </isoform>
    <text>Additional isoforms seem to exist.</text>
</comment>
<comment type="tissue specificity">
    <text evidence="11 24">Ubiquitous. Up-regulated in oral cancers.</text>
</comment>
<comment type="PTM">
    <text evidence="12">Proteolytically cleaved by caspase-3 during apoptosis.</text>
</comment>
<comment type="disease" evidence="9 13 15 17">
    <disease id="DI-01257">
        <name>Neutropenia, severe congenital 3, autosomal recessive</name>
        <acronym>SCN3</acronym>
        <description>A disorder of hematopoiesis characterized by maturation arrest of granulopoiesis at the level of promyelocytes with peripheral blood absolute neutrophil counts below 0.5 x 10(9)/l and early onset of severe bacterial infections. Some patients affected by severe congenital neutropenia type 3 have neurological manifestations such as psychomotor retardation and seizures.</description>
        <dbReference type="MIM" id="610738"/>
    </disease>
    <text evidence="13">The disease is caused by variants affecting the gene represented in this entry. The clinical phenotype due to HAX1 deficiency appears to depend on the localization of the mutations and their influence on the transcript variants. Mutations affecting exclusively isoform 1 are associated with isolated congenital neutropenia, whereas mutations affecting both isoform 1 and isoform 5 are associated with additional neurologic symptoms (PubMed:18337561).</text>
</comment>
<comment type="similarity">
    <text evidence="29">Belongs to the HAX1 family.</text>
</comment>
<comment type="online information" name="HAX1base">
    <link uri="https://databases.lovd.nl/shared/genes/HAX1"/>
    <text>HAX1 mutation db</text>
</comment>
<keyword id="KW-0007">Acetylation</keyword>
<keyword id="KW-0025">Alternative splicing</keyword>
<keyword id="KW-1003">Cell membrane</keyword>
<keyword id="KW-0963">Cytoplasm</keyword>
<keyword id="KW-0968">Cytoplasmic vesicle</keyword>
<keyword id="KW-0903">Direct protein sequencing</keyword>
<keyword id="KW-0225">Disease variant</keyword>
<keyword id="KW-0256">Endoplasmic reticulum</keyword>
<keyword id="KW-0472">Membrane</keyword>
<keyword id="KW-0496">Mitochondrion</keyword>
<keyword id="KW-0539">Nucleus</keyword>
<keyword id="KW-0597">Phosphoprotein</keyword>
<keyword id="KW-1267">Proteomics identification</keyword>
<keyword id="KW-1185">Reference proteome</keyword>
<keyword id="KW-0703">Sarcoplasmic reticulum</keyword>
<feature type="initiator methionine" description="Removed" evidence="25 31">
    <location>
        <position position="1"/>
    </location>
</feature>
<feature type="chain" id="PRO_0000083906" description="HCLS1-associated protein X-1">
    <location>
        <begin position="2"/>
        <end position="279"/>
    </location>
</feature>
<feature type="region of interest" description="Required for localization in mitochondria" evidence="1">
    <location>
        <begin position="2"/>
        <end position="41"/>
    </location>
</feature>
<feature type="region of interest" description="Disordered" evidence="4">
    <location>
        <begin position="16"/>
        <end position="65"/>
    </location>
</feature>
<feature type="region of interest" description="Disordered" evidence="4">
    <location>
        <begin position="99"/>
        <end position="262"/>
    </location>
</feature>
<feature type="region of interest" description="Involved in HCLS1 binding">
    <location>
        <begin position="114"/>
        <end position="279"/>
    </location>
</feature>
<feature type="region of interest" description="Involved in CASP9 binding">
    <location>
        <begin position="175"/>
        <end position="206"/>
    </location>
</feature>
<feature type="region of interest" description="Involved in GNA13 binding">
    <location>
        <begin position="176"/>
        <end position="247"/>
    </location>
</feature>
<feature type="region of interest" description="Required for localization in sarcoplasmic reticulum" evidence="1">
    <location>
        <begin position="183"/>
        <end position="279"/>
    </location>
</feature>
<feature type="region of interest" description="Involved in PKD2 binding">
    <location>
        <begin position="184"/>
        <end position="279"/>
    </location>
</feature>
<feature type="region of interest" description="Involved in ATP2A2 binding">
    <location>
        <begin position="203"/>
        <end position="245"/>
    </location>
</feature>
<feature type="region of interest" description="Involved in PLN binding">
    <location>
        <begin position="203"/>
        <end position="225"/>
    </location>
</feature>
<feature type="region of interest" description="Mediates interaction with UCP3" evidence="2">
    <location>
        <begin position="210"/>
        <end position="279"/>
    </location>
</feature>
<feature type="region of interest" description="Required for ITGB6 binding">
    <location>
        <begin position="270"/>
        <end position="279"/>
    </location>
</feature>
<feature type="compositionally biased region" description="Acidic residues" evidence="4">
    <location>
        <begin position="30"/>
        <end position="41"/>
    </location>
</feature>
<feature type="compositionally biased region" description="Basic and acidic residues" evidence="4">
    <location>
        <begin position="115"/>
        <end position="124"/>
    </location>
</feature>
<feature type="compositionally biased region" description="Basic and acidic residues" evidence="4">
    <location>
        <begin position="167"/>
        <end position="184"/>
    </location>
</feature>
<feature type="compositionally biased region" description="Basic and acidic residues" evidence="4">
    <location>
        <begin position="217"/>
        <end position="255"/>
    </location>
</feature>
<feature type="site" description="Cleavage; by caspase-3">
    <location>
        <begin position="127"/>
        <end position="128"/>
    </location>
</feature>
<feature type="modified residue" description="N-acetylserine" evidence="25 31">
    <location>
        <position position="2"/>
    </location>
</feature>
<feature type="modified residue" description="Phosphoserine" evidence="30">
    <location>
        <position position="189"/>
    </location>
</feature>
<feature type="modified residue" description="Phosphoserine" evidence="30">
    <location>
        <position position="192"/>
    </location>
</feature>
<feature type="splice variant" id="VSP_038536" description="In isoform 3." evidence="27 28">
    <location>
        <begin position="1"/>
        <end position="26"/>
    </location>
</feature>
<feature type="splice variant" id="VSP_038543" description="In isoform 5." evidence="27">
    <location>
        <begin position="18"/>
        <end position="65"/>
    </location>
</feature>
<feature type="splice variant" id="VSP_038544" description="In isoform 6." evidence="27">
    <original>VRDFNSIFSDMGAWTLPSHPPELPGPESETPGERLREGQTLRDSMLKYPDSHQPRIFGGVLESDARSESPQPAPDWGSQRPFHRFDDVWPMDPHPRTREDNDLDSQVSQEGLGPVLQPQPKSYFKSISVTKITKPDGIVEERRTVVDSEGRTETTVTRHEADSSPRGDPESPRPPALDDA</original>
    <variation>NFQVLSQRHLVRDYGRDRHFGTQCLSIQIVTSPGSLGGSWRVMQEVNPPNQHQTGAPRGHFIGLMMYGLWTPILEPERTMILIPRFPRRVLARFYSPSPNPISRASL</variation>
    <location>
        <begin position="85"/>
        <end position="264"/>
    </location>
</feature>
<feature type="splice variant" id="VSP_038537" description="In isoform 2." evidence="26 27">
    <original>P</original>
    <variation>PANTCHLSA</variation>
    <location>
        <position position="105"/>
    </location>
</feature>
<feature type="splice variant" id="VSP_038538" description="In isoform 4." evidence="26 27 28">
    <original>ELPGPESETPGERLREGQT</original>
    <variation>GVWLSLRGNLWFLVGWWVK</variation>
    <location>
        <begin position="106"/>
        <end position="124"/>
    </location>
</feature>
<feature type="splice variant" id="VSP_038539" description="In isoform 4." evidence="26 27 28">
    <location>
        <begin position="125"/>
        <end position="279"/>
    </location>
</feature>
<feature type="splice variant" id="VSP_038545" description="In isoform 6." evidence="27">
    <location>
        <begin position="265"/>
        <end position="279"/>
    </location>
</feature>
<feature type="sequence variant" id="VAR_062258" description="In dbSNP:rs11556344.">
    <original>P</original>
    <variation>S</variation>
    <location>
        <position position="49"/>
    </location>
</feature>
<feature type="sequence variant" id="VAR_064514" description="In SCN3; dbSNP:rs179363871." evidence="17">
    <original>L</original>
    <variation>R</variation>
    <location>
        <position position="130"/>
    </location>
</feature>
<feature type="sequence variant" id="VAR_062259" description="In SCN3; mild form; dbSNP:rs179363870." evidence="15">
    <original>F</original>
    <variation>L</variation>
    <location>
        <position position="141"/>
    </location>
</feature>
<feature type="sequence variant" id="VAR_062260" description="In dbSNP:rs17851425." evidence="7">
    <original>S</original>
    <variation>G</variation>
    <location>
        <position position="151"/>
    </location>
</feature>
<feature type="sequence variant" id="VAR_064515" description="In SCN3; likely benign; dbSNP:rs141970914." evidence="17">
    <original>V</original>
    <variation>I</variation>
    <location>
        <position position="172"/>
    </location>
</feature>
<feature type="sequence variant" id="VAR_062261" description="In dbSNP:rs1804715.">
    <original>S</original>
    <variation>P</variation>
    <location>
        <position position="278"/>
    </location>
</feature>
<feature type="sequence conflict" description="In Ref. 3; BAG62359." evidence="29" ref="3">
    <original>G</original>
    <variation>V</variation>
    <location>
        <position position="25"/>
    </location>
</feature>
<feature type="sequence conflict" description="In Ref. 1; AAB51196." evidence="29" ref="1">
    <original>G</original>
    <variation>R</variation>
    <location>
        <position position="45"/>
    </location>
</feature>
<feature type="sequence conflict" description="In Ref. 1; AAB51196." evidence="29" ref="1">
    <original>Q</original>
    <variation>T</variation>
    <location>
        <position position="201"/>
    </location>
</feature>
<protein>
    <recommendedName>
        <fullName>HCLS1-associated protein X-1</fullName>
    </recommendedName>
    <alternativeName>
        <fullName>HS1-associating protein X-1</fullName>
        <shortName>HAX-1</shortName>
    </alternativeName>
    <alternativeName>
        <fullName>HS1-binding protein 1</fullName>
        <shortName>HSP1BP-1</shortName>
    </alternativeName>
</protein>
<evidence type="ECO:0000250" key="1"/>
<evidence type="ECO:0000250" key="2">
    <source>
        <dbReference type="UniProtKB" id="O35387"/>
    </source>
</evidence>
<evidence type="ECO:0000250" key="3">
    <source>
        <dbReference type="UniProtKB" id="Q7TSE9"/>
    </source>
</evidence>
<evidence type="ECO:0000256" key="4">
    <source>
        <dbReference type="SAM" id="MobiDB-lite"/>
    </source>
</evidence>
<evidence type="ECO:0000269" key="5">
    <source>
    </source>
</evidence>
<evidence type="ECO:0000269" key="6">
    <source>
    </source>
</evidence>
<evidence type="ECO:0000269" key="7">
    <source>
    </source>
</evidence>
<evidence type="ECO:0000269" key="8">
    <source>
    </source>
</evidence>
<evidence type="ECO:0000269" key="9">
    <source>
    </source>
</evidence>
<evidence type="ECO:0000269" key="10">
    <source>
    </source>
</evidence>
<evidence type="ECO:0000269" key="11">
    <source>
    </source>
</evidence>
<evidence type="ECO:0000269" key="12">
    <source>
    </source>
</evidence>
<evidence type="ECO:0000269" key="13">
    <source>
    </source>
</evidence>
<evidence type="ECO:0000269" key="14">
    <source>
    </source>
</evidence>
<evidence type="ECO:0000269" key="15">
    <source>
    </source>
</evidence>
<evidence type="ECO:0000269" key="16">
    <source>
    </source>
</evidence>
<evidence type="ECO:0000269" key="17">
    <source>
    </source>
</evidence>
<evidence type="ECO:0000269" key="18">
    <source>
    </source>
</evidence>
<evidence type="ECO:0000269" key="19">
    <source>
    </source>
</evidence>
<evidence type="ECO:0000269" key="20">
    <source>
    </source>
</evidence>
<evidence type="ECO:0000269" key="21">
    <source>
    </source>
</evidence>
<evidence type="ECO:0000269" key="22">
    <source>
    </source>
</evidence>
<evidence type="ECO:0000269" key="23">
    <source>
    </source>
</evidence>
<evidence type="ECO:0000269" key="24">
    <source>
    </source>
</evidence>
<evidence type="ECO:0000269" key="25">
    <source ref="8"/>
</evidence>
<evidence type="ECO:0000303" key="26">
    <source>
    </source>
</evidence>
<evidence type="ECO:0000303" key="27">
    <source>
    </source>
</evidence>
<evidence type="ECO:0000303" key="28">
    <source ref="3"/>
</evidence>
<evidence type="ECO:0000305" key="29"/>
<evidence type="ECO:0007744" key="30">
    <source>
    </source>
</evidence>
<evidence type="ECO:0007744" key="31">
    <source>
    </source>
</evidence>
<name>HAX1_HUMAN</name>
<sequence length="279" mass="31621">MSLFDLFRGFFGFPGPRSHRDPFFGGMTRDEDDDEEEEEEGGSWGRGNPRFHSPQHPPEEFGFGFSFSPGGGIRFHDNFGFDDLVRDFNSIFSDMGAWTLPSHPPELPGPESETPGERLREGQTLRDSMLKYPDSHQPRIFGGVLESDARSESPQPAPDWGSQRPFHRFDDVWPMDPHPRTREDNDLDSQVSQEGLGPVLQPQPKSYFKSISVTKITKPDGIVEERRTVVDSEGRTETTVTRHEADSSPRGDPESPRPPALDDAFSILDLFLGRWFRSR</sequence>
<reference key="1">
    <citation type="journal article" date="1997" name="J. Immunol.">
        <title>HAX-1, a novel intracellular protein, localized on mitochondria, directly associates with HS1, a substrate of Src family tyrosine kinases.</title>
        <authorList>
            <person name="Suzuki Y."/>
            <person name="Demoliere C."/>
            <person name="Kitamura D."/>
            <person name="Takeshita H."/>
            <person name="Deuschle U."/>
            <person name="Watanabe T."/>
        </authorList>
    </citation>
    <scope>NUCLEOTIDE SEQUENCE [MRNA] (ISOFORM 1)</scope>
    <scope>FUNCTION</scope>
    <scope>SUBCELLULAR LOCATION</scope>
    <scope>INTERACTION WITH HCLS1</scope>
    <scope>TISSUE SPECIFICITY</scope>
    <source>
        <tissue>Cervix adenocarcinoma</tissue>
    </source>
</reference>
<reference key="2">
    <citation type="journal article" date="2008" name="J. Mol. Biol.">
        <title>Existence of multiple isoforms of HS1-associated protein X-1 in murine and human tissues.</title>
        <authorList>
            <person name="Lees D.M."/>
            <person name="Hart I.R."/>
            <person name="Marshall J.F."/>
        </authorList>
    </citation>
    <scope>NUCLEOTIDE SEQUENCE [MRNA] (ISOFORMS 1; 2; 3; 4; 5 AND 6)</scope>
</reference>
<reference key="3">
    <citation type="submission" date="2007-10" db="EMBL/GenBank/DDBJ databases">
        <authorList>
            <person name="Trebinska A."/>
            <person name="Grzybowska E.A."/>
        </authorList>
    </citation>
    <scope>NUCLEOTIDE SEQUENCE [MRNA] (ISOFORMS 3 AND 4)</scope>
    <source>
        <tissue>Lung</tissue>
    </source>
</reference>
<reference key="4">
    <citation type="journal article" date="2004" name="Nat. Genet.">
        <title>Complete sequencing and characterization of 21,243 full-length human cDNAs.</title>
        <authorList>
            <person name="Ota T."/>
            <person name="Suzuki Y."/>
            <person name="Nishikawa T."/>
            <person name="Otsuki T."/>
            <person name="Sugiyama T."/>
            <person name="Irie R."/>
            <person name="Wakamatsu A."/>
            <person name="Hayashi K."/>
            <person name="Sato H."/>
            <person name="Nagai K."/>
            <person name="Kimura K."/>
            <person name="Makita H."/>
            <person name="Sekine M."/>
            <person name="Obayashi M."/>
            <person name="Nishi T."/>
            <person name="Shibahara T."/>
            <person name="Tanaka T."/>
            <person name="Ishii S."/>
            <person name="Yamamoto J."/>
            <person name="Saito K."/>
            <person name="Kawai Y."/>
            <person name="Isono Y."/>
            <person name="Nakamura Y."/>
            <person name="Nagahari K."/>
            <person name="Murakami K."/>
            <person name="Yasuda T."/>
            <person name="Iwayanagi T."/>
            <person name="Wagatsuma M."/>
            <person name="Shiratori A."/>
            <person name="Sudo H."/>
            <person name="Hosoiri T."/>
            <person name="Kaku Y."/>
            <person name="Kodaira H."/>
            <person name="Kondo H."/>
            <person name="Sugawara M."/>
            <person name="Takahashi M."/>
            <person name="Kanda K."/>
            <person name="Yokoi T."/>
            <person name="Furuya T."/>
            <person name="Kikkawa E."/>
            <person name="Omura Y."/>
            <person name="Abe K."/>
            <person name="Kamihara K."/>
            <person name="Katsuta N."/>
            <person name="Sato K."/>
            <person name="Tanikawa M."/>
            <person name="Yamazaki M."/>
            <person name="Ninomiya K."/>
            <person name="Ishibashi T."/>
            <person name="Yamashita H."/>
            <person name="Murakawa K."/>
            <person name="Fujimori K."/>
            <person name="Tanai H."/>
            <person name="Kimata M."/>
            <person name="Watanabe M."/>
            <person name="Hiraoka S."/>
            <person name="Chiba Y."/>
            <person name="Ishida S."/>
            <person name="Ono Y."/>
            <person name="Takiguchi S."/>
            <person name="Watanabe S."/>
            <person name="Yosida M."/>
            <person name="Hotuta T."/>
            <person name="Kusano J."/>
            <person name="Kanehori K."/>
            <person name="Takahashi-Fujii A."/>
            <person name="Hara H."/>
            <person name="Tanase T.-O."/>
            <person name="Nomura Y."/>
            <person name="Togiya S."/>
            <person name="Komai F."/>
            <person name="Hara R."/>
            <person name="Takeuchi K."/>
            <person name="Arita M."/>
            <person name="Imose N."/>
            <person name="Musashino K."/>
            <person name="Yuuki H."/>
            <person name="Oshima A."/>
            <person name="Sasaki N."/>
            <person name="Aotsuka S."/>
            <person name="Yoshikawa Y."/>
            <person name="Matsunawa H."/>
            <person name="Ichihara T."/>
            <person name="Shiohata N."/>
            <person name="Sano S."/>
            <person name="Moriya S."/>
            <person name="Momiyama H."/>
            <person name="Satoh N."/>
            <person name="Takami S."/>
            <person name="Terashima Y."/>
            <person name="Suzuki O."/>
            <person name="Nakagawa S."/>
            <person name="Senoh A."/>
            <person name="Mizoguchi H."/>
            <person name="Goto Y."/>
            <person name="Shimizu F."/>
            <person name="Wakebe H."/>
            <person name="Hishigaki H."/>
            <person name="Watanabe T."/>
            <person name="Sugiyama A."/>
            <person name="Takemoto M."/>
            <person name="Kawakami B."/>
            <person name="Yamazaki M."/>
            <person name="Watanabe K."/>
            <person name="Kumagai A."/>
            <person name="Itakura S."/>
            <person name="Fukuzumi Y."/>
            <person name="Fujimori Y."/>
            <person name="Komiyama M."/>
            <person name="Tashiro H."/>
            <person name="Tanigami A."/>
            <person name="Fujiwara T."/>
            <person name="Ono T."/>
            <person name="Yamada K."/>
            <person name="Fujii Y."/>
            <person name="Ozaki K."/>
            <person name="Hirao M."/>
            <person name="Ohmori Y."/>
            <person name="Kawabata A."/>
            <person name="Hikiji T."/>
            <person name="Kobatake N."/>
            <person name="Inagaki H."/>
            <person name="Ikema Y."/>
            <person name="Okamoto S."/>
            <person name="Okitani R."/>
            <person name="Kawakami T."/>
            <person name="Noguchi S."/>
            <person name="Itoh T."/>
            <person name="Shigeta K."/>
            <person name="Senba T."/>
            <person name="Matsumura K."/>
            <person name="Nakajima Y."/>
            <person name="Mizuno T."/>
            <person name="Morinaga M."/>
            <person name="Sasaki M."/>
            <person name="Togashi T."/>
            <person name="Oyama M."/>
            <person name="Hata H."/>
            <person name="Watanabe M."/>
            <person name="Komatsu T."/>
            <person name="Mizushima-Sugano J."/>
            <person name="Satoh T."/>
            <person name="Shirai Y."/>
            <person name="Takahashi Y."/>
            <person name="Nakagawa K."/>
            <person name="Okumura K."/>
            <person name="Nagase T."/>
            <person name="Nomura N."/>
            <person name="Kikuchi H."/>
            <person name="Masuho Y."/>
            <person name="Yamashita R."/>
            <person name="Nakai K."/>
            <person name="Yada T."/>
            <person name="Nakamura Y."/>
            <person name="Ohara O."/>
            <person name="Isogai T."/>
            <person name="Sugano S."/>
        </authorList>
    </citation>
    <scope>NUCLEOTIDE SEQUENCE [LARGE SCALE MRNA] (ISOFORMS 1; 2 AND 4)</scope>
    <source>
        <tissue>Amygdala</tissue>
        <tissue>Heart</tissue>
        <tissue>Skeletal muscle</tissue>
    </source>
</reference>
<reference key="5">
    <citation type="journal article" date="2006" name="Nature">
        <title>The DNA sequence and biological annotation of human chromosome 1.</title>
        <authorList>
            <person name="Gregory S.G."/>
            <person name="Barlow K.F."/>
            <person name="McLay K.E."/>
            <person name="Kaul R."/>
            <person name="Swarbreck D."/>
            <person name="Dunham A."/>
            <person name="Scott C.E."/>
            <person name="Howe K.L."/>
            <person name="Woodfine K."/>
            <person name="Spencer C.C.A."/>
            <person name="Jones M.C."/>
            <person name="Gillson C."/>
            <person name="Searle S."/>
            <person name="Zhou Y."/>
            <person name="Kokocinski F."/>
            <person name="McDonald L."/>
            <person name="Evans R."/>
            <person name="Phillips K."/>
            <person name="Atkinson A."/>
            <person name="Cooper R."/>
            <person name="Jones C."/>
            <person name="Hall R.E."/>
            <person name="Andrews T.D."/>
            <person name="Lloyd C."/>
            <person name="Ainscough R."/>
            <person name="Almeida J.P."/>
            <person name="Ambrose K.D."/>
            <person name="Anderson F."/>
            <person name="Andrew R.W."/>
            <person name="Ashwell R.I.S."/>
            <person name="Aubin K."/>
            <person name="Babbage A.K."/>
            <person name="Bagguley C.L."/>
            <person name="Bailey J."/>
            <person name="Beasley H."/>
            <person name="Bethel G."/>
            <person name="Bird C.P."/>
            <person name="Bray-Allen S."/>
            <person name="Brown J.Y."/>
            <person name="Brown A.J."/>
            <person name="Buckley D."/>
            <person name="Burton J."/>
            <person name="Bye J."/>
            <person name="Carder C."/>
            <person name="Chapman J.C."/>
            <person name="Clark S.Y."/>
            <person name="Clarke G."/>
            <person name="Clee C."/>
            <person name="Cobley V."/>
            <person name="Collier R.E."/>
            <person name="Corby N."/>
            <person name="Coville G.J."/>
            <person name="Davies J."/>
            <person name="Deadman R."/>
            <person name="Dunn M."/>
            <person name="Earthrowl M."/>
            <person name="Ellington A.G."/>
            <person name="Errington H."/>
            <person name="Frankish A."/>
            <person name="Frankland J."/>
            <person name="French L."/>
            <person name="Garner P."/>
            <person name="Garnett J."/>
            <person name="Gay L."/>
            <person name="Ghori M.R.J."/>
            <person name="Gibson R."/>
            <person name="Gilby L.M."/>
            <person name="Gillett W."/>
            <person name="Glithero R.J."/>
            <person name="Grafham D.V."/>
            <person name="Griffiths C."/>
            <person name="Griffiths-Jones S."/>
            <person name="Grocock R."/>
            <person name="Hammond S."/>
            <person name="Harrison E.S.I."/>
            <person name="Hart E."/>
            <person name="Haugen E."/>
            <person name="Heath P.D."/>
            <person name="Holmes S."/>
            <person name="Holt K."/>
            <person name="Howden P.J."/>
            <person name="Hunt A.R."/>
            <person name="Hunt S.E."/>
            <person name="Hunter G."/>
            <person name="Isherwood J."/>
            <person name="James R."/>
            <person name="Johnson C."/>
            <person name="Johnson D."/>
            <person name="Joy A."/>
            <person name="Kay M."/>
            <person name="Kershaw J.K."/>
            <person name="Kibukawa M."/>
            <person name="Kimberley A.M."/>
            <person name="King A."/>
            <person name="Knights A.J."/>
            <person name="Lad H."/>
            <person name="Laird G."/>
            <person name="Lawlor S."/>
            <person name="Leongamornlert D.A."/>
            <person name="Lloyd D.M."/>
            <person name="Loveland J."/>
            <person name="Lovell J."/>
            <person name="Lush M.J."/>
            <person name="Lyne R."/>
            <person name="Martin S."/>
            <person name="Mashreghi-Mohammadi M."/>
            <person name="Matthews L."/>
            <person name="Matthews N.S.W."/>
            <person name="McLaren S."/>
            <person name="Milne S."/>
            <person name="Mistry S."/>
            <person name="Moore M.J.F."/>
            <person name="Nickerson T."/>
            <person name="O'Dell C.N."/>
            <person name="Oliver K."/>
            <person name="Palmeiri A."/>
            <person name="Palmer S.A."/>
            <person name="Parker A."/>
            <person name="Patel D."/>
            <person name="Pearce A.V."/>
            <person name="Peck A.I."/>
            <person name="Pelan S."/>
            <person name="Phelps K."/>
            <person name="Phillimore B.J."/>
            <person name="Plumb R."/>
            <person name="Rajan J."/>
            <person name="Raymond C."/>
            <person name="Rouse G."/>
            <person name="Saenphimmachak C."/>
            <person name="Sehra H.K."/>
            <person name="Sheridan E."/>
            <person name="Shownkeen R."/>
            <person name="Sims S."/>
            <person name="Skuce C.D."/>
            <person name="Smith M."/>
            <person name="Steward C."/>
            <person name="Subramanian S."/>
            <person name="Sycamore N."/>
            <person name="Tracey A."/>
            <person name="Tromans A."/>
            <person name="Van Helmond Z."/>
            <person name="Wall M."/>
            <person name="Wallis J.M."/>
            <person name="White S."/>
            <person name="Whitehead S.L."/>
            <person name="Wilkinson J.E."/>
            <person name="Willey D.L."/>
            <person name="Williams H."/>
            <person name="Wilming L."/>
            <person name="Wray P.W."/>
            <person name="Wu Z."/>
            <person name="Coulson A."/>
            <person name="Vaudin M."/>
            <person name="Sulston J.E."/>
            <person name="Durbin R.M."/>
            <person name="Hubbard T."/>
            <person name="Wooster R."/>
            <person name="Dunham I."/>
            <person name="Carter N.P."/>
            <person name="McVean G."/>
            <person name="Ross M.T."/>
            <person name="Harrow J."/>
            <person name="Olson M.V."/>
            <person name="Beck S."/>
            <person name="Rogers J."/>
            <person name="Bentley D.R."/>
        </authorList>
    </citation>
    <scope>NUCLEOTIDE SEQUENCE [LARGE SCALE GENOMIC DNA]</scope>
</reference>
<reference key="6">
    <citation type="submission" date="2005-09" db="EMBL/GenBank/DDBJ databases">
        <authorList>
            <person name="Mural R.J."/>
            <person name="Istrail S."/>
            <person name="Sutton G.G."/>
            <person name="Florea L."/>
            <person name="Halpern A.L."/>
            <person name="Mobarry C.M."/>
            <person name="Lippert R."/>
            <person name="Walenz B."/>
            <person name="Shatkay H."/>
            <person name="Dew I."/>
            <person name="Miller J.R."/>
            <person name="Flanigan M.J."/>
            <person name="Edwards N.J."/>
            <person name="Bolanos R."/>
            <person name="Fasulo D."/>
            <person name="Halldorsson B.V."/>
            <person name="Hannenhalli S."/>
            <person name="Turner R."/>
            <person name="Yooseph S."/>
            <person name="Lu F."/>
            <person name="Nusskern D.R."/>
            <person name="Shue B.C."/>
            <person name="Zheng X.H."/>
            <person name="Zhong F."/>
            <person name="Delcher A.L."/>
            <person name="Huson D.H."/>
            <person name="Kravitz S.A."/>
            <person name="Mouchard L."/>
            <person name="Reinert K."/>
            <person name="Remington K.A."/>
            <person name="Clark A.G."/>
            <person name="Waterman M.S."/>
            <person name="Eichler E.E."/>
            <person name="Adams M.D."/>
            <person name="Hunkapiller M.W."/>
            <person name="Myers E.W."/>
            <person name="Venter J.C."/>
        </authorList>
    </citation>
    <scope>NUCLEOTIDE SEQUENCE [LARGE SCALE GENOMIC DNA]</scope>
</reference>
<reference key="7">
    <citation type="journal article" date="2004" name="Genome Res.">
        <title>The status, quality, and expansion of the NIH full-length cDNA project: the Mammalian Gene Collection (MGC).</title>
        <authorList>
            <consortium name="The MGC Project Team"/>
        </authorList>
    </citation>
    <scope>NUCLEOTIDE SEQUENCE [LARGE SCALE MRNA] (ISOFORM 1)</scope>
    <scope>VARIANT GLY-151</scope>
    <source>
        <tissue>Brain</tissue>
        <tissue>Lung</tissue>
        <tissue>Skin</tissue>
    </source>
</reference>
<reference key="8">
    <citation type="submission" date="2007-07" db="UniProtKB">
        <authorList>
            <person name="Bienvenut W.V."/>
            <person name="Boldt K."/>
            <person name="von Kriegsheim A.F."/>
            <person name="Kolch W."/>
        </authorList>
    </citation>
    <scope>PROTEIN SEQUENCE OF 2-17 AND 140-150</scope>
    <scope>CLEAVAGE OF INITIATOR METHIONINE</scope>
    <scope>ACETYLATION AT SER-2</scope>
    <scope>IDENTIFICATION BY MASS SPECTROMETRY</scope>
    <source>
        <tissue>Hepatoma</tissue>
    </source>
</reference>
<reference key="9">
    <citation type="journal article" date="2000" name="Proc. Natl. Acad. Sci. U.S.A.">
        <title>The polycystic kidney disease protein PKD2 interacts with Hax-1, a protein associated with the actin cytoskeleton.</title>
        <authorList>
            <person name="Gallagher A.R."/>
            <person name="Cedzich A."/>
            <person name="Gretz N."/>
            <person name="Somlo S."/>
            <person name="Witzgall R."/>
        </authorList>
    </citation>
    <scope>INTERACTION WITH PKD2</scope>
</reference>
<reference key="10">
    <citation type="journal article" date="2004" name="J. Biol. Chem.">
        <title>Galpha13 stimulates cell migration through cortactin-interacting protein Hax-1.</title>
        <authorList>
            <person name="Radhika V."/>
            <person name="Onesime D."/>
            <person name="Ha J.H."/>
            <person name="Dhanasekaran N."/>
        </authorList>
    </citation>
    <scope>INTERACTION WITH GNA13</scope>
    <scope>FUNCTION</scope>
</reference>
<reference key="11">
    <citation type="journal article" date="2006" name="Circ. Res.">
        <title>Overexpression of HAX-1 protects cardiac myocytes from apoptosis through caspase-9 inhibition.</title>
        <authorList>
            <person name="Han Y."/>
            <person name="Chen Y.S."/>
            <person name="Liu Z."/>
            <person name="Bodyak N."/>
            <person name="Rigor D."/>
            <person name="Bisping E."/>
            <person name="Pu W.T."/>
            <person name="Kang P.M."/>
        </authorList>
    </citation>
    <scope>INTERACTION WITH CASP9</scope>
    <scope>FUNCTION</scope>
</reference>
<reference key="12">
    <citation type="journal article" date="2007" name="Cancer Res.">
        <title>HS1-associated protein X-1 regulates carcinoma cell migration and invasion via clathrin-mediated endocytosis of integrin alphavbeta6.</title>
        <authorList>
            <person name="Ramsay A.G."/>
            <person name="Keppler M.D."/>
            <person name="Jazayeri M."/>
            <person name="Thomas G.J."/>
            <person name="Parsons M."/>
            <person name="Violette S."/>
            <person name="Weinreb P."/>
            <person name="Hart I.R."/>
            <person name="Marshall J.F."/>
        </authorList>
    </citation>
    <scope>INTERACTION WITH ITGB6</scope>
    <scope>FUNCTION</scope>
    <scope>TISSUE SPECIFICITY</scope>
</reference>
<reference key="13">
    <citation type="journal article" date="2007" name="J. Mol. Biol.">
        <title>Phospholamban interacts with HAX-1, a mitochondrial protein with anti-apoptotic function.</title>
        <authorList>
            <person name="Vafiadaki E."/>
            <person name="Sanoudou D."/>
            <person name="Arvanitis D.A."/>
            <person name="Catino D.H."/>
            <person name="Kranias E.G."/>
            <person name="Kontrogianni-Konstantopoulos A."/>
        </authorList>
    </citation>
    <scope>INTERACTION WITH PLN</scope>
</reference>
<reference key="14">
    <citation type="journal article" date="2007" name="Nat. Genet.">
        <title>HAX1 deficiency causes autosomal recessive severe congenital neutropenia (Kostmann disease).</title>
        <authorList>
            <person name="Klein C."/>
            <person name="Grudzien M."/>
            <person name="Appaswamy G."/>
            <person name="Germeshausen M."/>
            <person name="Sandrock I."/>
            <person name="Schaeffer A.A."/>
            <person name="Rathinam C."/>
            <person name="Boztug K."/>
            <person name="Schwinzer B."/>
            <person name="Rezaei N."/>
            <person name="Bohn G."/>
            <person name="Melin M."/>
            <person name="Carlsson G."/>
            <person name="Fadeel B."/>
            <person name="Dahl N."/>
            <person name="Palmblad J."/>
            <person name="Henter J.-I."/>
            <person name="Zeidler C."/>
            <person name="Grimbacher B."/>
            <person name="Welte K."/>
        </authorList>
    </citation>
    <scope>INVOLVEMENT IN SCN3</scope>
</reference>
<reference key="15">
    <citation type="journal article" date="2008" name="Blood">
        <title>Novel HAX1 mutations in patients with severe congenital neutropenia reveal isoform-dependent genotype-phenotype associations.</title>
        <authorList>
            <person name="Germeshausen M."/>
            <person name="Grudzien M."/>
            <person name="Zeidler C."/>
            <person name="Abdollahpour H."/>
            <person name="Yetgin S."/>
            <person name="Rezaei N."/>
            <person name="Ballmaier M."/>
            <person name="Grimbacher B."/>
            <person name="Welte K."/>
            <person name="Klein C."/>
        </authorList>
    </citation>
    <scope>INVOLVEMENT IN SCN3</scope>
    <scope>ISOFORM DEPENDENT GENOTYPE-PHENOTYPE ASSOCIATIONS</scope>
</reference>
<reference key="16">
    <citation type="journal article" date="2008" name="Mol. Cells">
        <title>HS 1-associated protein X-1 is cleaved by caspase-3 during apoptosis.</title>
        <authorList>
            <person name="Lee A.Y."/>
            <person name="Lee Y."/>
            <person name="Park Y.K."/>
            <person name="Bae K.-H."/>
            <person name="Cho S."/>
            <person name="Lee do H."/>
            <person name="Park B.C."/>
            <person name="Kang S."/>
            <person name="Park S.G."/>
        </authorList>
    </citation>
    <scope>CLEAVAGE SITE</scope>
    <scope>FUNCTION</scope>
</reference>
<reference key="17">
    <citation type="journal article" date="2009" name="Mol. Biol. Cell">
        <title>The anti-apoptotic protein HAX-1 interacts with SERCA2 and regulates its protein levels to promote cell survival.</title>
        <authorList>
            <person name="Vafiadaki E."/>
            <person name="Arvanitis D.A."/>
            <person name="Pagakis S.N."/>
            <person name="Papalouka V."/>
            <person name="Sanoudou D."/>
            <person name="Kontrogianni-Konstantopoulos A."/>
            <person name="Kranias E.G."/>
        </authorList>
    </citation>
    <scope>INTERACTION WITH ATP2A2 AND PLN</scope>
    <scope>FUNCTION</scope>
    <scope>SUBCELLULAR LOCATION</scope>
</reference>
<reference key="18">
    <citation type="journal article" date="2010" name="Biochem. Biophys. Res. Commun.">
        <title>Molecular interaction between HAX-1 and XIAP inhibits apoptosis.</title>
        <authorList>
            <person name="Kang Y.J."/>
            <person name="Jang M."/>
            <person name="Park Y.K."/>
            <person name="Kang S."/>
            <person name="Bae K.H."/>
            <person name="Cho S."/>
            <person name="Lee C.K."/>
            <person name="Park B.C."/>
            <person name="Chi S.W."/>
            <person name="Park S.G."/>
        </authorList>
    </citation>
    <scope>INTERACTION WITH XIAP/BIRC4</scope>
</reference>
<reference key="19">
    <citation type="journal article" date="2011" name="BMC Syst. Biol.">
        <title>Initial characterization of the human central proteome.</title>
        <authorList>
            <person name="Burkard T.R."/>
            <person name="Planyavsky M."/>
            <person name="Kaupe I."/>
            <person name="Breitwieser F.P."/>
            <person name="Buerckstuemmer T."/>
            <person name="Bennett K.L."/>
            <person name="Superti-Furga G."/>
            <person name="Colinge J."/>
        </authorList>
    </citation>
    <scope>IDENTIFICATION BY MASS SPECTROMETRY [LARGE SCALE ANALYSIS]</scope>
</reference>
<reference key="20">
    <citation type="journal article" date="2011" name="J. Mol. Recognit.">
        <title>Grb7 binds to Hax-1 and undergoes an intramolecular domain association that offers a model for Grb7 regulation.</title>
        <authorList>
            <person name="Siamakpour-Reihani S."/>
            <person name="Peterson T.A."/>
            <person name="Bradford A.M."/>
            <person name="Argiros H.J."/>
            <person name="Haas L.L."/>
            <person name="Lor S.N."/>
            <person name="Haulsee Z.M."/>
            <person name="Spuches A.M."/>
            <person name="Johnson D.L."/>
            <person name="Rohrschneider L.R."/>
            <person name="Shuster C.B."/>
            <person name="Lyons B.A."/>
        </authorList>
    </citation>
    <scope>INTERACTION WITH GRB7</scope>
</reference>
<reference key="21">
    <citation type="journal article" date="2013" name="FEBS J.">
        <title>HAX-1 is a nucleocytoplasmic shuttling protein with a possible role in mRNA processing.</title>
        <authorList>
            <person name="Grzybowska E.A."/>
            <person name="Zayat V."/>
            <person name="Konopinski R."/>
            <person name="Trebinska A."/>
            <person name="Szwarc M."/>
            <person name="Sarnowska E."/>
            <person name="Macech E."/>
            <person name="Korczynski J."/>
            <person name="Knapp A."/>
            <person name="Siedlecki J.A."/>
        </authorList>
    </citation>
    <scope>ALTERNATIVE SPLICING</scope>
    <scope>SUBCELLULAR LOCATION (ISOFORMS 1; 3; 4 AND 5)</scope>
    <scope>INTERACTION WITH XPO1</scope>
</reference>
<reference key="22">
    <citation type="journal article" date="2013" name="FEBS Lett.">
        <title>Hax-1 identified as a two-pore channel (TPC)-binding protein.</title>
        <authorList>
            <person name="Lam A.K."/>
            <person name="Galione A."/>
            <person name="Lai F.A."/>
            <person name="Zissimopoulos S."/>
        </authorList>
    </citation>
    <scope>INTERACTION WITH TPC2</scope>
</reference>
<reference key="23">
    <citation type="journal article" date="2013" name="J. Proteome Res.">
        <title>Toward a comprehensive characterization of a human cancer cell phosphoproteome.</title>
        <authorList>
            <person name="Zhou H."/>
            <person name="Di Palma S."/>
            <person name="Preisinger C."/>
            <person name="Peng M."/>
            <person name="Polat A.N."/>
            <person name="Heck A.J."/>
            <person name="Mohammed S."/>
        </authorList>
    </citation>
    <scope>PHOSPHORYLATION [LARGE SCALE ANALYSIS] AT SER-189 AND SER-192</scope>
    <scope>IDENTIFICATION BY MASS SPECTROMETRY [LARGE SCALE ANALYSIS]</scope>
    <source>
        <tissue>Cervix carcinoma</tissue>
    </source>
</reference>
<reference key="24">
    <citation type="journal article" date="2014" name="J. Proteomics">
        <title>An enzyme assisted RP-RPLC approach for in-depth analysis of human liver phosphoproteome.</title>
        <authorList>
            <person name="Bian Y."/>
            <person name="Song C."/>
            <person name="Cheng K."/>
            <person name="Dong M."/>
            <person name="Wang F."/>
            <person name="Huang J."/>
            <person name="Sun D."/>
            <person name="Wang L."/>
            <person name="Ye M."/>
            <person name="Zou H."/>
        </authorList>
    </citation>
    <scope>IDENTIFICATION BY MASS SPECTROMETRY [LARGE SCALE ANALYSIS]</scope>
    <source>
        <tissue>Liver</tissue>
    </source>
</reference>
<reference key="25">
    <citation type="journal article" date="2014" name="Sci. Rep.">
        <title>Identification and characterization of OSTL (RNF217) encoding a RING-IBR-RING protein adjacent to a translocation breakpoint involving ETV6 in childhood ALL.</title>
        <authorList>
            <person name="Fontanari Krause L.M."/>
            <person name="Japp A.S."/>
            <person name="Krause A."/>
            <person name="Mooster J."/>
            <person name="Chopra M."/>
            <person name="Mueschen M."/>
            <person name="Bohlander S.K."/>
        </authorList>
    </citation>
    <scope>SUBCELLULAR LOCATION</scope>
    <scope>INTERACTION WITH RNF217</scope>
</reference>
<reference key="26">
    <citation type="journal article" date="2015" name="J. Biol. Chem.">
        <title>Regulation of Focal Adhesion Dynamics and Cell Motility by the EB2 and Hax1 Protein Complex.</title>
        <authorList>
            <person name="Liu H."/>
            <person name="Yue J."/>
            <person name="Huang H."/>
            <person name="Gou X."/>
            <person name="Chen S.Y."/>
            <person name="Zhao Y."/>
            <person name="Wu X."/>
        </authorList>
    </citation>
    <scope>INTERACTION WITH MAPRE2</scope>
</reference>
<reference key="27">
    <citation type="journal article" date="2015" name="Proteomics">
        <title>N-terminome analysis of the human mitochondrial proteome.</title>
        <authorList>
            <person name="Vaca Jacome A.S."/>
            <person name="Rabilloud T."/>
            <person name="Schaeffer-Reiss C."/>
            <person name="Rompais M."/>
            <person name="Ayoub D."/>
            <person name="Lane L."/>
            <person name="Bairoch A."/>
            <person name="Van Dorsselaer A."/>
            <person name="Carapito C."/>
        </authorList>
    </citation>
    <scope>ACETYLATION [LARGE SCALE ANALYSIS] AT SER-2</scope>
    <scope>CLEAVAGE OF INITIATOR METHIONINE [LARGE SCALE ANALYSIS]</scope>
    <scope>IDENTIFICATION BY MASS SPECTROMETRY [LARGE SCALE ANALYSIS]</scope>
</reference>
<reference key="28">
    <citation type="journal article" date="2016" name="Biochem. Biophys. Res. Commun.">
        <title>UCP3 is associated with Hax-1 in mitochondria in the presence of calcium ion.</title>
        <authorList>
            <person name="Hirasaka K."/>
            <person name="Mills E.M."/>
            <person name="Haruna M."/>
            <person name="Bando A."/>
            <person name="Ikeda C."/>
            <person name="Abe T."/>
            <person name="Kohno S."/>
            <person name="Nowinski S.M."/>
            <person name="Lago C.U."/>
            <person name="Akagi K."/>
            <person name="Tochio H."/>
            <person name="Ohno A."/>
            <person name="Teshima-Kondo S."/>
            <person name="Okumura Y."/>
            <person name="Nikawa T."/>
        </authorList>
    </citation>
    <scope>INTERACTION WITH UCP3</scope>
</reference>
<reference key="29">
    <citation type="journal article" date="2016" name="Cell">
        <title>Kv3.3 channels bind Hax-1 and Arp2/3 to assemble a stable local actin network that regulates channel gating.</title>
        <authorList>
            <person name="Zhang Y."/>
            <person name="Zhang X.F."/>
            <person name="Fleming M.R."/>
            <person name="Amiri A."/>
            <person name="El-Hassar L."/>
            <person name="Surguchev A.A."/>
            <person name="Hyland C."/>
            <person name="Jenkins D.P."/>
            <person name="Desai R."/>
            <person name="Brown M.R."/>
            <person name="Gazula V.R."/>
            <person name="Waters M.F."/>
            <person name="Large C.H."/>
            <person name="Horvath T.L."/>
            <person name="Navaratnam D."/>
            <person name="Vaccarino F.M."/>
            <person name="Forscher P."/>
            <person name="Kaczmarek L.K."/>
        </authorList>
    </citation>
    <scope>FUNCTION</scope>
    <scope>INTERACTION WITH KCNC3</scope>
    <scope>SUBCELLULAR LOCATION</scope>
</reference>
<reference key="30">
    <citation type="journal article" date="2009" name="Clin. Genet.">
        <title>A novel missense mutation in the HAX1 gene in severe congenital neutropenia patients (Kostmann disease).</title>
        <authorList>
            <person name="Faiyaz-Ul-Haque M."/>
            <person name="Al-Jefri A."/>
            <person name="Abalkhail H.A."/>
            <person name="Toulimat M."/>
            <person name="Al-Muallimi M.A."/>
            <person name="Pulicat M.S."/>
            <person name="Gaafar A."/>
            <person name="Alaiya A.A."/>
            <person name="Al-Dayel F."/>
            <person name="Peltekova I."/>
            <person name="Zaidi S.H."/>
        </authorList>
    </citation>
    <scope>VARIANT SCN3 LEU-141</scope>
</reference>
<reference key="31">
    <citation type="journal article" date="2010" name="Haematologica">
        <title>Digenic mutations in severe congenital neutropenia.</title>
        <authorList>
            <person name="Germeshausen M."/>
            <person name="Zeidler C."/>
            <person name="Stuhrmann M."/>
            <person name="Lanciotti M."/>
            <person name="Ballmaier M."/>
            <person name="Welte K."/>
        </authorList>
    </citation>
    <scope>VARIANTS SCN3 ARG-130 AND ILE-172</scope>
</reference>
<dbReference type="EMBL" id="U68566">
    <property type="protein sequence ID" value="AAB51196.1"/>
    <property type="molecule type" value="mRNA"/>
</dbReference>
<dbReference type="EMBL" id="EU190982">
    <property type="protein sequence ID" value="ABW73998.1"/>
    <property type="molecule type" value="mRNA"/>
</dbReference>
<dbReference type="EMBL" id="EU190983">
    <property type="protein sequence ID" value="ABW73999.1"/>
    <property type="molecule type" value="mRNA"/>
</dbReference>
<dbReference type="EMBL" id="AK290626">
    <property type="protein sequence ID" value="BAF83315.1"/>
    <property type="molecule type" value="mRNA"/>
</dbReference>
<dbReference type="EMBL" id="AK294298">
    <property type="protein sequence ID" value="BAG57580.1"/>
    <property type="molecule type" value="mRNA"/>
</dbReference>
<dbReference type="EMBL" id="AK300676">
    <property type="protein sequence ID" value="BAG62359.1"/>
    <property type="molecule type" value="mRNA"/>
</dbReference>
<dbReference type="EMBL" id="AL354980">
    <property type="status" value="NOT_ANNOTATED_CDS"/>
    <property type="molecule type" value="Genomic_DNA"/>
</dbReference>
<dbReference type="EMBL" id="CH471121">
    <property type="protein sequence ID" value="EAW53212.1"/>
    <property type="molecule type" value="Genomic_DNA"/>
</dbReference>
<dbReference type="EMBL" id="BC005240">
    <property type="protein sequence ID" value="AAH05240.1"/>
    <property type="molecule type" value="mRNA"/>
</dbReference>
<dbReference type="EMBL" id="BC014314">
    <property type="protein sequence ID" value="AAH14314.1"/>
    <property type="molecule type" value="mRNA"/>
</dbReference>
<dbReference type="EMBL" id="BC015209">
    <property type="protein sequence ID" value="AAH15209.1"/>
    <property type="molecule type" value="mRNA"/>
</dbReference>
<dbReference type="EMBL" id="BC016730">
    <property type="protein sequence ID" value="AAH16730.1"/>
    <property type="molecule type" value="mRNA"/>
</dbReference>
<dbReference type="CCDS" id="CCDS1064.1">
    <molecule id="O00165-1"/>
</dbReference>
<dbReference type="CCDS" id="CCDS44230.1">
    <molecule id="O00165-5"/>
</dbReference>
<dbReference type="RefSeq" id="NP_001018238.1">
    <molecule id="O00165-5"/>
    <property type="nucleotide sequence ID" value="NM_001018837.2"/>
</dbReference>
<dbReference type="RefSeq" id="NP_006109.2">
    <molecule id="O00165-1"/>
    <property type="nucleotide sequence ID" value="NM_006118.3"/>
</dbReference>
<dbReference type="BioGRID" id="115719">
    <property type="interactions" value="440"/>
</dbReference>
<dbReference type="CORUM" id="O00165"/>
<dbReference type="DIP" id="DIP-36771N"/>
<dbReference type="FunCoup" id="O00165">
    <property type="interactions" value="401"/>
</dbReference>
<dbReference type="IntAct" id="O00165">
    <property type="interactions" value="254"/>
</dbReference>
<dbReference type="MINT" id="O00165"/>
<dbReference type="STRING" id="9606.ENSP00000329002"/>
<dbReference type="ChEMBL" id="CHEMBL4295644"/>
<dbReference type="GlyGen" id="O00165">
    <property type="glycosylation" value="1 site, 1 O-linked glycan (1 site)"/>
</dbReference>
<dbReference type="iPTMnet" id="O00165"/>
<dbReference type="PhosphoSitePlus" id="O00165"/>
<dbReference type="BioMuta" id="HAX1"/>
<dbReference type="jPOST" id="O00165"/>
<dbReference type="MassIVE" id="O00165"/>
<dbReference type="PaxDb" id="9606-ENSP00000329002"/>
<dbReference type="PeptideAtlas" id="O00165"/>
<dbReference type="ProteomicsDB" id="47750">
    <molecule id="O00165-1"/>
</dbReference>
<dbReference type="ProteomicsDB" id="47751">
    <molecule id="O00165-2"/>
</dbReference>
<dbReference type="ProteomicsDB" id="47752">
    <molecule id="O00165-3"/>
</dbReference>
<dbReference type="ProteomicsDB" id="47753">
    <molecule id="O00165-4"/>
</dbReference>
<dbReference type="ProteomicsDB" id="47754">
    <molecule id="O00165-5"/>
</dbReference>
<dbReference type="ProteomicsDB" id="47755">
    <molecule id="O00165-6"/>
</dbReference>
<dbReference type="Pumba" id="O00165"/>
<dbReference type="TopDownProteomics" id="O00165-2">
    <molecule id="O00165-2"/>
</dbReference>
<dbReference type="Antibodypedia" id="34150">
    <property type="antibodies" value="501 antibodies from 37 providers"/>
</dbReference>
<dbReference type="DNASU" id="10456"/>
<dbReference type="Ensembl" id="ENST00000328703.12">
    <molecule id="O00165-1"/>
    <property type="protein sequence ID" value="ENSP00000329002.7"/>
    <property type="gene ID" value="ENSG00000143575.16"/>
</dbReference>
<dbReference type="Ensembl" id="ENST00000447768.7">
    <molecule id="O00165-6"/>
    <property type="protein sequence ID" value="ENSP00000403848.2"/>
    <property type="gene ID" value="ENSG00000143575.16"/>
</dbReference>
<dbReference type="Ensembl" id="ENST00000457918.6">
    <molecule id="O00165-5"/>
    <property type="protein sequence ID" value="ENSP00000411448.2"/>
    <property type="gene ID" value="ENSG00000143575.16"/>
</dbReference>
<dbReference type="Ensembl" id="ENST00000483970.7">
    <molecule id="O00165-2"/>
    <property type="protein sequence ID" value="ENSP00000435088.1"/>
    <property type="gene ID" value="ENSG00000143575.16"/>
</dbReference>
<dbReference type="Ensembl" id="ENST00000696932.1">
    <molecule id="O00165-1"/>
    <property type="protein sequence ID" value="ENSP00000512979.1"/>
    <property type="gene ID" value="ENSG00000143575.16"/>
</dbReference>
<dbReference type="Ensembl" id="ENST00000696941.1">
    <molecule id="O00165-3"/>
    <property type="protein sequence ID" value="ENSP00000512986.1"/>
    <property type="gene ID" value="ENSG00000143575.16"/>
</dbReference>
<dbReference type="Ensembl" id="ENST00000697592.1">
    <molecule id="O00165-3"/>
    <property type="protein sequence ID" value="ENSP00000513356.1"/>
    <property type="gene ID" value="ENSG00000143575.16"/>
</dbReference>
<dbReference type="Ensembl" id="ENST00000697830.1">
    <molecule id="O00165-3"/>
    <property type="protein sequence ID" value="ENSP00000513452.1"/>
    <property type="gene ID" value="ENSG00000143575.16"/>
</dbReference>
<dbReference type="GeneID" id="10456"/>
<dbReference type="KEGG" id="hsa:10456"/>
<dbReference type="MANE-Select" id="ENST00000328703.12">
    <property type="protein sequence ID" value="ENSP00000329002.7"/>
    <property type="RefSeq nucleotide sequence ID" value="NM_006118.4"/>
    <property type="RefSeq protein sequence ID" value="NP_006109.2"/>
</dbReference>
<dbReference type="UCSC" id="uc001fes.5">
    <molecule id="O00165-1"/>
    <property type="organism name" value="human"/>
</dbReference>
<dbReference type="AGR" id="HGNC:16915"/>
<dbReference type="CTD" id="10456"/>
<dbReference type="DisGeNET" id="10456"/>
<dbReference type="GeneCards" id="HAX1"/>
<dbReference type="HGNC" id="HGNC:16915">
    <property type="gene designation" value="HAX1"/>
</dbReference>
<dbReference type="HPA" id="ENSG00000143575">
    <property type="expression patterns" value="Low tissue specificity"/>
</dbReference>
<dbReference type="MalaCards" id="HAX1"/>
<dbReference type="MIM" id="605998">
    <property type="type" value="gene"/>
</dbReference>
<dbReference type="MIM" id="610738">
    <property type="type" value="phenotype"/>
</dbReference>
<dbReference type="neXtProt" id="NX_O00165"/>
<dbReference type="OpenTargets" id="ENSG00000143575"/>
<dbReference type="Orphanet" id="99749">
    <property type="disease" value="Kostmann syndrome"/>
</dbReference>
<dbReference type="PharmGKB" id="PA142671700"/>
<dbReference type="VEuPathDB" id="HostDB:ENSG00000143575"/>
<dbReference type="eggNOG" id="ENOG502S0AE">
    <property type="taxonomic scope" value="Eukaryota"/>
</dbReference>
<dbReference type="GeneTree" id="ENSGT00390000018324"/>
<dbReference type="HOGENOM" id="CLU_086695_0_0_1"/>
<dbReference type="InParanoid" id="O00165"/>
<dbReference type="OMA" id="SKFNDIW"/>
<dbReference type="OrthoDB" id="5562606at2759"/>
<dbReference type="PAN-GO" id="O00165">
    <property type="GO annotations" value="7 GO annotations based on evolutionary models"/>
</dbReference>
<dbReference type="PhylomeDB" id="O00165"/>
<dbReference type="TreeFam" id="TF328619"/>
<dbReference type="PathwayCommons" id="O00165"/>
<dbReference type="SignaLink" id="O00165"/>
<dbReference type="SIGNOR" id="O00165"/>
<dbReference type="BioGRID-ORCS" id="10456">
    <property type="hits" value="96 hits in 1161 CRISPR screens"/>
</dbReference>
<dbReference type="CD-CODE" id="232F8A39">
    <property type="entry name" value="P-body"/>
</dbReference>
<dbReference type="ChiTaRS" id="HAX1">
    <property type="organism name" value="human"/>
</dbReference>
<dbReference type="GeneWiki" id="HAX1"/>
<dbReference type="GenomeRNAi" id="10456"/>
<dbReference type="Pharos" id="O00165">
    <property type="development level" value="Tbio"/>
</dbReference>
<dbReference type="PRO" id="PR:O00165"/>
<dbReference type="Proteomes" id="UP000005640">
    <property type="component" value="Chromosome 1"/>
</dbReference>
<dbReference type="RNAct" id="O00165">
    <property type="molecule type" value="protein"/>
</dbReference>
<dbReference type="Bgee" id="ENSG00000143575">
    <property type="expression patterns" value="Expressed in apex of heart and 215 other cell types or tissues"/>
</dbReference>
<dbReference type="ExpressionAtlas" id="O00165">
    <property type="expression patterns" value="baseline and differential"/>
</dbReference>
<dbReference type="GO" id="GO:0015629">
    <property type="term" value="C:actin cytoskeleton"/>
    <property type="evidence" value="ECO:0000250"/>
    <property type="project" value="BHF-UCL"/>
</dbReference>
<dbReference type="GO" id="GO:0016324">
    <property type="term" value="C:apical plasma membrane"/>
    <property type="evidence" value="ECO:0000318"/>
    <property type="project" value="GO_Central"/>
</dbReference>
<dbReference type="GO" id="GO:0005938">
    <property type="term" value="C:cell cortex"/>
    <property type="evidence" value="ECO:0007669"/>
    <property type="project" value="UniProtKB-SubCell"/>
</dbReference>
<dbReference type="GO" id="GO:0030136">
    <property type="term" value="C:clathrin-coated vesicle"/>
    <property type="evidence" value="ECO:0000318"/>
    <property type="project" value="GO_Central"/>
</dbReference>
<dbReference type="GO" id="GO:0005783">
    <property type="term" value="C:endoplasmic reticulum"/>
    <property type="evidence" value="ECO:0000250"/>
    <property type="project" value="BHF-UCL"/>
</dbReference>
<dbReference type="GO" id="GO:0030027">
    <property type="term" value="C:lamellipodium"/>
    <property type="evidence" value="ECO:0000250"/>
    <property type="project" value="BHF-UCL"/>
</dbReference>
<dbReference type="GO" id="GO:0005758">
    <property type="term" value="C:mitochondrial intermembrane space"/>
    <property type="evidence" value="ECO:0000314"/>
    <property type="project" value="UniProtKB"/>
</dbReference>
<dbReference type="GO" id="GO:0005759">
    <property type="term" value="C:mitochondrial matrix"/>
    <property type="evidence" value="ECO:0007669"/>
    <property type="project" value="UniProtKB-SubCell"/>
</dbReference>
<dbReference type="GO" id="GO:0005741">
    <property type="term" value="C:mitochondrial outer membrane"/>
    <property type="evidence" value="ECO:0000314"/>
    <property type="project" value="UniProtKB"/>
</dbReference>
<dbReference type="GO" id="GO:0005739">
    <property type="term" value="C:mitochondrion"/>
    <property type="evidence" value="ECO:0000314"/>
    <property type="project" value="HPA"/>
</dbReference>
<dbReference type="GO" id="GO:0005635">
    <property type="term" value="C:nuclear envelope"/>
    <property type="evidence" value="ECO:0000304"/>
    <property type="project" value="ProtInc"/>
</dbReference>
<dbReference type="GO" id="GO:0031965">
    <property type="term" value="C:nuclear membrane"/>
    <property type="evidence" value="ECO:0007669"/>
    <property type="project" value="UniProtKB-SubCell"/>
</dbReference>
<dbReference type="GO" id="GO:0000932">
    <property type="term" value="C:P-body"/>
    <property type="evidence" value="ECO:0007669"/>
    <property type="project" value="UniProtKB-SubCell"/>
</dbReference>
<dbReference type="GO" id="GO:0016529">
    <property type="term" value="C:sarcoplasmic reticulum"/>
    <property type="evidence" value="ECO:0000318"/>
    <property type="project" value="GO_Central"/>
</dbReference>
<dbReference type="GO" id="GO:0005667">
    <property type="term" value="C:transcription regulator complex"/>
    <property type="evidence" value="ECO:0000314"/>
    <property type="project" value="BHF-UCL"/>
</dbReference>
<dbReference type="GO" id="GO:0019966">
    <property type="term" value="F:interleukin-1 binding"/>
    <property type="evidence" value="ECO:0000314"/>
    <property type="project" value="UniProtKB"/>
</dbReference>
<dbReference type="GO" id="GO:0019904">
    <property type="term" value="F:protein domain specific binding"/>
    <property type="evidence" value="ECO:0007669"/>
    <property type="project" value="Ensembl"/>
</dbReference>
<dbReference type="GO" id="GO:0035591">
    <property type="term" value="F:signaling adaptor activity"/>
    <property type="evidence" value="ECO:0000315"/>
    <property type="project" value="BHF-UCL"/>
</dbReference>
<dbReference type="GO" id="GO:0071345">
    <property type="term" value="P:cellular response to cytokine stimulus"/>
    <property type="evidence" value="ECO:0000315"/>
    <property type="project" value="BHF-UCL"/>
</dbReference>
<dbReference type="GO" id="GO:0038158">
    <property type="term" value="P:granulocyte colony-stimulating factor signaling pathway"/>
    <property type="evidence" value="ECO:0000315"/>
    <property type="project" value="BHF-UCL"/>
</dbReference>
<dbReference type="GO" id="GO:0043066">
    <property type="term" value="P:negative regulation of apoptotic process"/>
    <property type="evidence" value="ECO:0000315"/>
    <property type="project" value="UniProtKB"/>
</dbReference>
<dbReference type="GO" id="GO:0030854">
    <property type="term" value="P:positive regulation of granulocyte differentiation"/>
    <property type="evidence" value="ECO:0000315"/>
    <property type="project" value="BHF-UCL"/>
</dbReference>
<dbReference type="GO" id="GO:0051897">
    <property type="term" value="P:positive regulation of phosphatidylinositol 3-kinase/protein kinase B signal transduction"/>
    <property type="evidence" value="ECO:0000315"/>
    <property type="project" value="BHF-UCL"/>
</dbReference>
<dbReference type="GO" id="GO:0045944">
    <property type="term" value="P:positive regulation of transcription by RNA polymerase II"/>
    <property type="evidence" value="ECO:0000315"/>
    <property type="project" value="BHF-UCL"/>
</dbReference>
<dbReference type="GO" id="GO:0110053">
    <property type="term" value="P:regulation of actin filament organization"/>
    <property type="evidence" value="ECO:0000315"/>
    <property type="project" value="BHF-UCL"/>
</dbReference>
<dbReference type="GO" id="GO:0030833">
    <property type="term" value="P:regulation of actin filament polymerization"/>
    <property type="evidence" value="ECO:0000315"/>
    <property type="project" value="BHF-UCL"/>
</dbReference>
<dbReference type="GO" id="GO:0042981">
    <property type="term" value="P:regulation of apoptotic process"/>
    <property type="evidence" value="ECO:0000304"/>
    <property type="project" value="ParkinsonsUK-UCL"/>
</dbReference>
<dbReference type="GO" id="GO:1903146">
    <property type="term" value="P:regulation of autophagy of mitochondrion"/>
    <property type="evidence" value="ECO:0000304"/>
    <property type="project" value="ParkinsonsUK-UCL"/>
</dbReference>
<dbReference type="GO" id="GO:1903214">
    <property type="term" value="P:regulation of protein targeting to mitochondrion"/>
    <property type="evidence" value="ECO:0000304"/>
    <property type="project" value="ParkinsonsUK-UCL"/>
</dbReference>
<dbReference type="InterPro" id="IPR017248">
    <property type="entry name" value="HAX-1"/>
</dbReference>
<dbReference type="PANTHER" id="PTHR14938">
    <property type="entry name" value="HCLS1-ASSOCIATED PROTEIN X-1"/>
    <property type="match status" value="1"/>
</dbReference>
<dbReference type="PANTHER" id="PTHR14938:SF2">
    <property type="entry name" value="HCLS1-ASSOCIATED PROTEIN X-1"/>
    <property type="match status" value="1"/>
</dbReference>
<dbReference type="PIRSF" id="PIRSF037634">
    <property type="entry name" value="HS1-associating_X-1"/>
    <property type="match status" value="1"/>
</dbReference>